<comment type="function">
    <text evidence="1">Component of the Mediator complex, a coactivator involved in the regulated transcription of nearly all RNA polymerase II-dependent genes. Mediator functions as a bridge to convey information from gene-specific regulatory proteins to the basal RNA polymerase II transcription machinery. Mediator is recruited to promoters by direct interactions with regulatory proteins and serves as a scaffold for the assembly of a functional preinitiation complex with RNA polymerase II and the general transcription factors (By similarity).</text>
</comment>
<comment type="subunit">
    <text evidence="1">Component of the Mediator complex, which is composed of MED1, MED4, MED6, MED7, MED8, MED9, MED10, MED11, MED12, MED13, MED13L, MED14, MED15, MED16, MED17, MED18, MED19, MED20, MED21, MED22, MED23, MED24, MED25, MED26, MED27, MED29, MED30, MED31, CCNC, CDK8 and CDC2L6/CDK11. The MED12, MED13, CCNC and CDK8 subunits form a distinct module termed the CDK8 module. Mediator containing the CDK8 module is less active than Mediator lacking this module in supporting transcriptional activation. Individual preparations of the Mediator complex lacking one or more distinct subunits have been variously termed ARC, CRSP, DRIP, PC2, SMCC and TRAP (By similarity).</text>
</comment>
<comment type="subcellular location">
    <subcellularLocation>
        <location evidence="5">Nucleus</location>
    </subcellularLocation>
</comment>
<comment type="similarity">
    <text evidence="5">Belongs to the Mediator complex subunit 9 family.</text>
</comment>
<reference key="1">
    <citation type="journal article" date="2002" name="Genome Res.">
        <title>Genes in a refined Smith-Magenis syndrome critical deletion interval on chromosome 17p11.2 and the syntenic region of the mouse.</title>
        <authorList>
            <person name="Bi W."/>
            <person name="Yan J."/>
            <person name="Stankiewicz P."/>
            <person name="Park S.-S."/>
            <person name="Walz K."/>
            <person name="Boerkoel C.F."/>
            <person name="Potocki L."/>
            <person name="Shaffer L.G."/>
            <person name="Devriendt K."/>
            <person name="Nowaczyk M.J.M."/>
            <person name="Inoue K."/>
            <person name="Lupski J.R."/>
        </authorList>
    </citation>
    <scope>NUCLEOTIDE SEQUENCE [MRNA]</scope>
    <source>
        <strain>C57BL/6J</strain>
    </source>
</reference>
<reference key="2">
    <citation type="journal article" date="2005" name="Science">
        <title>The transcriptional landscape of the mammalian genome.</title>
        <authorList>
            <person name="Carninci P."/>
            <person name="Kasukawa T."/>
            <person name="Katayama S."/>
            <person name="Gough J."/>
            <person name="Frith M.C."/>
            <person name="Maeda N."/>
            <person name="Oyama R."/>
            <person name="Ravasi T."/>
            <person name="Lenhard B."/>
            <person name="Wells C."/>
            <person name="Kodzius R."/>
            <person name="Shimokawa K."/>
            <person name="Bajic V.B."/>
            <person name="Brenner S.E."/>
            <person name="Batalov S."/>
            <person name="Forrest A.R."/>
            <person name="Zavolan M."/>
            <person name="Davis M.J."/>
            <person name="Wilming L.G."/>
            <person name="Aidinis V."/>
            <person name="Allen J.E."/>
            <person name="Ambesi-Impiombato A."/>
            <person name="Apweiler R."/>
            <person name="Aturaliya R.N."/>
            <person name="Bailey T.L."/>
            <person name="Bansal M."/>
            <person name="Baxter L."/>
            <person name="Beisel K.W."/>
            <person name="Bersano T."/>
            <person name="Bono H."/>
            <person name="Chalk A.M."/>
            <person name="Chiu K.P."/>
            <person name="Choudhary V."/>
            <person name="Christoffels A."/>
            <person name="Clutterbuck D.R."/>
            <person name="Crowe M.L."/>
            <person name="Dalla E."/>
            <person name="Dalrymple B.P."/>
            <person name="de Bono B."/>
            <person name="Della Gatta G."/>
            <person name="di Bernardo D."/>
            <person name="Down T."/>
            <person name="Engstrom P."/>
            <person name="Fagiolini M."/>
            <person name="Faulkner G."/>
            <person name="Fletcher C.F."/>
            <person name="Fukushima T."/>
            <person name="Furuno M."/>
            <person name="Futaki S."/>
            <person name="Gariboldi M."/>
            <person name="Georgii-Hemming P."/>
            <person name="Gingeras T.R."/>
            <person name="Gojobori T."/>
            <person name="Green R.E."/>
            <person name="Gustincich S."/>
            <person name="Harbers M."/>
            <person name="Hayashi Y."/>
            <person name="Hensch T.K."/>
            <person name="Hirokawa N."/>
            <person name="Hill D."/>
            <person name="Huminiecki L."/>
            <person name="Iacono M."/>
            <person name="Ikeo K."/>
            <person name="Iwama A."/>
            <person name="Ishikawa T."/>
            <person name="Jakt M."/>
            <person name="Kanapin A."/>
            <person name="Katoh M."/>
            <person name="Kawasawa Y."/>
            <person name="Kelso J."/>
            <person name="Kitamura H."/>
            <person name="Kitano H."/>
            <person name="Kollias G."/>
            <person name="Krishnan S.P."/>
            <person name="Kruger A."/>
            <person name="Kummerfeld S.K."/>
            <person name="Kurochkin I.V."/>
            <person name="Lareau L.F."/>
            <person name="Lazarevic D."/>
            <person name="Lipovich L."/>
            <person name="Liu J."/>
            <person name="Liuni S."/>
            <person name="McWilliam S."/>
            <person name="Madan Babu M."/>
            <person name="Madera M."/>
            <person name="Marchionni L."/>
            <person name="Matsuda H."/>
            <person name="Matsuzawa S."/>
            <person name="Miki H."/>
            <person name="Mignone F."/>
            <person name="Miyake S."/>
            <person name="Morris K."/>
            <person name="Mottagui-Tabar S."/>
            <person name="Mulder N."/>
            <person name="Nakano N."/>
            <person name="Nakauchi H."/>
            <person name="Ng P."/>
            <person name="Nilsson R."/>
            <person name="Nishiguchi S."/>
            <person name="Nishikawa S."/>
            <person name="Nori F."/>
            <person name="Ohara O."/>
            <person name="Okazaki Y."/>
            <person name="Orlando V."/>
            <person name="Pang K.C."/>
            <person name="Pavan W.J."/>
            <person name="Pavesi G."/>
            <person name="Pesole G."/>
            <person name="Petrovsky N."/>
            <person name="Piazza S."/>
            <person name="Reed J."/>
            <person name="Reid J.F."/>
            <person name="Ring B.Z."/>
            <person name="Ringwald M."/>
            <person name="Rost B."/>
            <person name="Ruan Y."/>
            <person name="Salzberg S.L."/>
            <person name="Sandelin A."/>
            <person name="Schneider C."/>
            <person name="Schoenbach C."/>
            <person name="Sekiguchi K."/>
            <person name="Semple C.A."/>
            <person name="Seno S."/>
            <person name="Sessa L."/>
            <person name="Sheng Y."/>
            <person name="Shibata Y."/>
            <person name="Shimada H."/>
            <person name="Shimada K."/>
            <person name="Silva D."/>
            <person name="Sinclair B."/>
            <person name="Sperling S."/>
            <person name="Stupka E."/>
            <person name="Sugiura K."/>
            <person name="Sultana R."/>
            <person name="Takenaka Y."/>
            <person name="Taki K."/>
            <person name="Tammoja K."/>
            <person name="Tan S.L."/>
            <person name="Tang S."/>
            <person name="Taylor M.S."/>
            <person name="Tegner J."/>
            <person name="Teichmann S.A."/>
            <person name="Ueda H.R."/>
            <person name="van Nimwegen E."/>
            <person name="Verardo R."/>
            <person name="Wei C.L."/>
            <person name="Yagi K."/>
            <person name="Yamanishi H."/>
            <person name="Zabarovsky E."/>
            <person name="Zhu S."/>
            <person name="Zimmer A."/>
            <person name="Hide W."/>
            <person name="Bult C."/>
            <person name="Grimmond S.M."/>
            <person name="Teasdale R.D."/>
            <person name="Liu E.T."/>
            <person name="Brusic V."/>
            <person name="Quackenbush J."/>
            <person name="Wahlestedt C."/>
            <person name="Mattick J.S."/>
            <person name="Hume D.A."/>
            <person name="Kai C."/>
            <person name="Sasaki D."/>
            <person name="Tomaru Y."/>
            <person name="Fukuda S."/>
            <person name="Kanamori-Katayama M."/>
            <person name="Suzuki M."/>
            <person name="Aoki J."/>
            <person name="Arakawa T."/>
            <person name="Iida J."/>
            <person name="Imamura K."/>
            <person name="Itoh M."/>
            <person name="Kato T."/>
            <person name="Kawaji H."/>
            <person name="Kawagashira N."/>
            <person name="Kawashima T."/>
            <person name="Kojima M."/>
            <person name="Kondo S."/>
            <person name="Konno H."/>
            <person name="Nakano K."/>
            <person name="Ninomiya N."/>
            <person name="Nishio T."/>
            <person name="Okada M."/>
            <person name="Plessy C."/>
            <person name="Shibata K."/>
            <person name="Shiraki T."/>
            <person name="Suzuki S."/>
            <person name="Tagami M."/>
            <person name="Waki K."/>
            <person name="Watahiki A."/>
            <person name="Okamura-Oho Y."/>
            <person name="Suzuki H."/>
            <person name="Kawai J."/>
            <person name="Hayashizaki Y."/>
        </authorList>
    </citation>
    <scope>NUCLEOTIDE SEQUENCE [LARGE SCALE MRNA]</scope>
    <source>
        <strain>C57BL/6J</strain>
        <tissue>Kidney</tissue>
        <tissue>Ovary</tissue>
        <tissue>Uterus</tissue>
    </source>
</reference>
<reference key="3">
    <citation type="journal article" date="2009" name="PLoS Biol.">
        <title>Lineage-specific biology revealed by a finished genome assembly of the mouse.</title>
        <authorList>
            <person name="Church D.M."/>
            <person name="Goodstadt L."/>
            <person name="Hillier L.W."/>
            <person name="Zody M.C."/>
            <person name="Goldstein S."/>
            <person name="She X."/>
            <person name="Bult C.J."/>
            <person name="Agarwala R."/>
            <person name="Cherry J.L."/>
            <person name="DiCuccio M."/>
            <person name="Hlavina W."/>
            <person name="Kapustin Y."/>
            <person name="Meric P."/>
            <person name="Maglott D."/>
            <person name="Birtle Z."/>
            <person name="Marques A.C."/>
            <person name="Graves T."/>
            <person name="Zhou S."/>
            <person name="Teague B."/>
            <person name="Potamousis K."/>
            <person name="Churas C."/>
            <person name="Place M."/>
            <person name="Herschleb J."/>
            <person name="Runnheim R."/>
            <person name="Forrest D."/>
            <person name="Amos-Landgraf J."/>
            <person name="Schwartz D.C."/>
            <person name="Cheng Z."/>
            <person name="Lindblad-Toh K."/>
            <person name="Eichler E.E."/>
            <person name="Ponting C.P."/>
        </authorList>
    </citation>
    <scope>NUCLEOTIDE SEQUENCE [LARGE SCALE GENOMIC DNA]</scope>
    <source>
        <strain>C57BL/6J</strain>
    </source>
</reference>
<reference key="4">
    <citation type="journal article" date="2004" name="Genome Res.">
        <title>The status, quality, and expansion of the NIH full-length cDNA project: the Mammalian Gene Collection (MGC).</title>
        <authorList>
            <consortium name="The MGC Project Team"/>
        </authorList>
    </citation>
    <scope>NUCLEOTIDE SEQUENCE [LARGE SCALE MRNA]</scope>
    <source>
        <strain>FVB/N</strain>
        <tissue>Liver</tissue>
    </source>
</reference>
<feature type="initiator methionine" description="Removed" evidence="2">
    <location>
        <position position="1"/>
    </location>
</feature>
<feature type="chain" id="PRO_0000304148" description="Mediator of RNA polymerase II transcription subunit 9">
    <location>
        <begin position="2"/>
        <end position="142"/>
    </location>
</feature>
<feature type="region of interest" description="Disordered" evidence="4">
    <location>
        <begin position="1"/>
        <end position="58"/>
    </location>
</feature>
<feature type="coiled-coil region" evidence="3">
    <location>
        <begin position="78"/>
        <end position="134"/>
    </location>
</feature>
<feature type="compositionally biased region" description="Pro residues" evidence="4">
    <location>
        <begin position="17"/>
        <end position="49"/>
    </location>
</feature>
<feature type="modified residue" description="N-acetylalanine" evidence="2">
    <location>
        <position position="2"/>
    </location>
</feature>
<feature type="modified residue" description="Phosphoserine" evidence="2">
    <location>
        <position position="106"/>
    </location>
</feature>
<feature type="sequence conflict" description="In Ref. 1; AAL77034." evidence="5" ref="1">
    <original>P</original>
    <variation>A</variation>
    <location>
        <position position="32"/>
    </location>
</feature>
<feature type="sequence conflict" description="In Ref. 2; BAC36735." evidence="5" ref="2">
    <original>L</original>
    <variation>M</variation>
    <location>
        <position position="64"/>
    </location>
</feature>
<sequence length="142" mass="15709">MASSGVAGGRQAEDTLQPPPELLPESKPPPPPQPLPVAALPPPAAPRPQSPAGAKEENYSFLPLVHNVIKCMDKDSPDLHQDLNALKTKFQELRKLIGTMPGIHVSPEQQQQQLHSLREQVRTKNELLQKYKSLCMFEIPKD</sequence>
<dbReference type="EMBL" id="AF467888">
    <property type="protein sequence ID" value="AAL77034.1"/>
    <property type="molecule type" value="mRNA"/>
</dbReference>
<dbReference type="EMBL" id="AK077295">
    <property type="protein sequence ID" value="BAC36735.2"/>
    <property type="molecule type" value="mRNA"/>
</dbReference>
<dbReference type="EMBL" id="AK147123">
    <property type="protein sequence ID" value="BAE27694.1"/>
    <property type="molecule type" value="mRNA"/>
</dbReference>
<dbReference type="EMBL" id="AL603710">
    <property type="status" value="NOT_ANNOTATED_CDS"/>
    <property type="molecule type" value="Genomic_DNA"/>
</dbReference>
<dbReference type="EMBL" id="BC019367">
    <property type="protein sequence ID" value="AAH19367.1"/>
    <property type="molecule type" value="mRNA"/>
</dbReference>
<dbReference type="CCDS" id="CCDS24780.1"/>
<dbReference type="RefSeq" id="NP_619616.2">
    <property type="nucleotide sequence ID" value="NM_138675.3"/>
</dbReference>
<dbReference type="PDB" id="6W1S">
    <property type="method" value="EM"/>
    <property type="resolution" value="4.02 A"/>
    <property type="chains" value="F=61-136"/>
</dbReference>
<dbReference type="PDB" id="8T1I">
    <property type="method" value="EM"/>
    <property type="resolution" value="4.68 A"/>
    <property type="chains" value="F=1-142"/>
</dbReference>
<dbReference type="PDB" id="8T1L">
    <property type="method" value="EM"/>
    <property type="resolution" value="4.83 A"/>
    <property type="chains" value="F=1-142"/>
</dbReference>
<dbReference type="PDBsum" id="6W1S"/>
<dbReference type="PDBsum" id="8T1I"/>
<dbReference type="PDBsum" id="8T1L"/>
<dbReference type="EMDB" id="EMD-21514"/>
<dbReference type="EMDB" id="EMD-40968"/>
<dbReference type="EMDB" id="EMD-40971"/>
<dbReference type="SMR" id="Q8VCS6"/>
<dbReference type="BioGRID" id="228668">
    <property type="interactions" value="2"/>
</dbReference>
<dbReference type="ComplexPortal" id="CPX-3264">
    <property type="entry name" value="Core mediator complex"/>
</dbReference>
<dbReference type="FunCoup" id="Q8VCS6">
    <property type="interactions" value="2453"/>
</dbReference>
<dbReference type="STRING" id="10090.ENSMUSP00000080641"/>
<dbReference type="iPTMnet" id="Q8VCS6"/>
<dbReference type="PhosphoSitePlus" id="Q8VCS6"/>
<dbReference type="PaxDb" id="10090-ENSMUSP00000080641"/>
<dbReference type="PeptideAtlas" id="Q8VCS6"/>
<dbReference type="ProteomicsDB" id="295922"/>
<dbReference type="Pumba" id="Q8VCS6"/>
<dbReference type="Antibodypedia" id="25454">
    <property type="antibodies" value="148 antibodies from 23 providers"/>
</dbReference>
<dbReference type="Ensembl" id="ENSMUST00000081980.7">
    <property type="protein sequence ID" value="ENSMUSP00000080641.7"/>
    <property type="gene ID" value="ENSMUSG00000061650.7"/>
</dbReference>
<dbReference type="GeneID" id="192191"/>
<dbReference type="KEGG" id="mmu:192191"/>
<dbReference type="UCSC" id="uc007jfg.1">
    <property type="organism name" value="mouse"/>
</dbReference>
<dbReference type="AGR" id="MGI:2183151"/>
<dbReference type="CTD" id="55090"/>
<dbReference type="MGI" id="MGI:2183151">
    <property type="gene designation" value="Med9"/>
</dbReference>
<dbReference type="VEuPathDB" id="HostDB:ENSMUSG00000061650"/>
<dbReference type="eggNOG" id="ENOG502S51J">
    <property type="taxonomic scope" value="Eukaryota"/>
</dbReference>
<dbReference type="GeneTree" id="ENSGT00390000017379"/>
<dbReference type="HOGENOM" id="CLU_148111_0_0_1"/>
<dbReference type="InParanoid" id="Q8VCS6"/>
<dbReference type="OMA" id="TMPGIQL"/>
<dbReference type="OrthoDB" id="5950777at2759"/>
<dbReference type="PhylomeDB" id="Q8VCS6"/>
<dbReference type="TreeFam" id="TF324926"/>
<dbReference type="BioGRID-ORCS" id="192191">
    <property type="hits" value="11 hits in 80 CRISPR screens"/>
</dbReference>
<dbReference type="ChiTaRS" id="Med9">
    <property type="organism name" value="mouse"/>
</dbReference>
<dbReference type="PRO" id="PR:Q8VCS6"/>
<dbReference type="Proteomes" id="UP000000589">
    <property type="component" value="Chromosome 11"/>
</dbReference>
<dbReference type="RNAct" id="Q8VCS6">
    <property type="molecule type" value="protein"/>
</dbReference>
<dbReference type="Bgee" id="ENSMUSG00000061650">
    <property type="expression patterns" value="Expressed in seminiferous tubule of testis and 247 other cell types or tissues"/>
</dbReference>
<dbReference type="GO" id="GO:0070847">
    <property type="term" value="C:core mediator complex"/>
    <property type="evidence" value="ECO:0000266"/>
    <property type="project" value="ComplexPortal"/>
</dbReference>
<dbReference type="GO" id="GO:0016592">
    <property type="term" value="C:mediator complex"/>
    <property type="evidence" value="ECO:0000314"/>
    <property type="project" value="MGI"/>
</dbReference>
<dbReference type="GO" id="GO:0005654">
    <property type="term" value="C:nucleoplasm"/>
    <property type="evidence" value="ECO:0000304"/>
    <property type="project" value="Reactome"/>
</dbReference>
<dbReference type="GO" id="GO:0005634">
    <property type="term" value="C:nucleus"/>
    <property type="evidence" value="ECO:0000266"/>
    <property type="project" value="ComplexPortal"/>
</dbReference>
<dbReference type="GO" id="GO:0003712">
    <property type="term" value="F:transcription coregulator activity"/>
    <property type="evidence" value="ECO:0007669"/>
    <property type="project" value="InterPro"/>
</dbReference>
<dbReference type="GO" id="GO:0032968">
    <property type="term" value="P:positive regulation of transcription elongation by RNA polymerase II"/>
    <property type="evidence" value="ECO:0000303"/>
    <property type="project" value="ComplexPortal"/>
</dbReference>
<dbReference type="GO" id="GO:0060261">
    <property type="term" value="P:positive regulation of transcription initiation by RNA polymerase II"/>
    <property type="evidence" value="ECO:0000303"/>
    <property type="project" value="ComplexPortal"/>
</dbReference>
<dbReference type="GO" id="GO:0051123">
    <property type="term" value="P:RNA polymerase II preinitiation complex assembly"/>
    <property type="evidence" value="ECO:0000303"/>
    <property type="project" value="ComplexPortal"/>
</dbReference>
<dbReference type="CDD" id="cd21431">
    <property type="entry name" value="Med9-C"/>
    <property type="match status" value="1"/>
</dbReference>
<dbReference type="Gene3D" id="6.10.280.10">
    <property type="entry name" value="Mediator complex, subunit Med21"/>
    <property type="match status" value="1"/>
</dbReference>
<dbReference type="InterPro" id="IPR037212">
    <property type="entry name" value="Med7/Med21-like"/>
</dbReference>
<dbReference type="InterPro" id="IPR011425">
    <property type="entry name" value="Med9"/>
</dbReference>
<dbReference type="InterPro" id="IPR039242">
    <property type="entry name" value="MED9_metazoa"/>
</dbReference>
<dbReference type="PANTHER" id="PTHR20844:SF0">
    <property type="entry name" value="MEDIATOR OF RNA POLYMERASE II TRANSCRIPTION SUBUNIT 9"/>
    <property type="match status" value="1"/>
</dbReference>
<dbReference type="PANTHER" id="PTHR20844">
    <property type="entry name" value="MEDIATOR OF RNA POLYMERASE II TRANSCRIPTION, SUBUNIT 9"/>
    <property type="match status" value="1"/>
</dbReference>
<dbReference type="Pfam" id="PF07544">
    <property type="entry name" value="Med9"/>
    <property type="match status" value="1"/>
</dbReference>
<dbReference type="SUPFAM" id="SSF140718">
    <property type="entry name" value="Mediator hinge subcomplex-like"/>
    <property type="match status" value="1"/>
</dbReference>
<gene>
    <name type="primary">Med9</name>
    <name type="synonym">Med25</name>
</gene>
<evidence type="ECO:0000250" key="1"/>
<evidence type="ECO:0000250" key="2">
    <source>
        <dbReference type="UniProtKB" id="Q9NWA0"/>
    </source>
</evidence>
<evidence type="ECO:0000255" key="3"/>
<evidence type="ECO:0000256" key="4">
    <source>
        <dbReference type="SAM" id="MobiDB-lite"/>
    </source>
</evidence>
<evidence type="ECO:0000305" key="5"/>
<protein>
    <recommendedName>
        <fullName>Mediator of RNA polymerase II transcription subunit 9</fullName>
    </recommendedName>
    <alternativeName>
        <fullName>Mediator complex subunit 9</fullName>
    </alternativeName>
</protein>
<proteinExistence type="evidence at protein level"/>
<organism>
    <name type="scientific">Mus musculus</name>
    <name type="common">Mouse</name>
    <dbReference type="NCBI Taxonomy" id="10090"/>
    <lineage>
        <taxon>Eukaryota</taxon>
        <taxon>Metazoa</taxon>
        <taxon>Chordata</taxon>
        <taxon>Craniata</taxon>
        <taxon>Vertebrata</taxon>
        <taxon>Euteleostomi</taxon>
        <taxon>Mammalia</taxon>
        <taxon>Eutheria</taxon>
        <taxon>Euarchontoglires</taxon>
        <taxon>Glires</taxon>
        <taxon>Rodentia</taxon>
        <taxon>Myomorpha</taxon>
        <taxon>Muroidea</taxon>
        <taxon>Muridae</taxon>
        <taxon>Murinae</taxon>
        <taxon>Mus</taxon>
        <taxon>Mus</taxon>
    </lineage>
</organism>
<name>MED9_MOUSE</name>
<keyword id="KW-0002">3D-structure</keyword>
<keyword id="KW-0007">Acetylation</keyword>
<keyword id="KW-0010">Activator</keyword>
<keyword id="KW-0175">Coiled coil</keyword>
<keyword id="KW-0539">Nucleus</keyword>
<keyword id="KW-0597">Phosphoprotein</keyword>
<keyword id="KW-1185">Reference proteome</keyword>
<keyword id="KW-0804">Transcription</keyword>
<keyword id="KW-0805">Transcription regulation</keyword>
<accession>Q8VCS6</accession>
<accession>Q8BHQ8</accession>
<accession>Q8R5H4</accession>